<comment type="function">
    <text evidence="3">Colony queen number, a major feature of social organization, is associated with worker genotype for Gp-9. Colonies are headed by either a single reproductive queen (monogyne form) or multiple queens (polygyne form). Differences in worker Gp-9 genotypes between social forms may cause differences in workers' abilities to recognize queens and regulate their numbers (By similarity).</text>
</comment>
<comment type="subunit">
    <text evidence="2">Homodimer.</text>
</comment>
<comment type="subcellular location">
    <subcellularLocation>
        <location evidence="1">Secreted</location>
    </subcellularLocation>
</comment>
<comment type="polymorphism">
    <text evidence="5">Allele B is shown, monogyne population from Argentina.</text>
</comment>
<comment type="similarity">
    <text evidence="4">Belongs to the PBP/GOBP family.</text>
</comment>
<proteinExistence type="inferred from homology"/>
<evidence type="ECO:0000250" key="1"/>
<evidence type="ECO:0000250" key="2">
    <source>
        <dbReference type="UniProtKB" id="P20797"/>
    </source>
</evidence>
<evidence type="ECO:0000250" key="3">
    <source>
        <dbReference type="UniProtKB" id="Q8WP90"/>
    </source>
</evidence>
<evidence type="ECO:0000255" key="4"/>
<evidence type="ECO:0000269" key="5">
    <source>
    </source>
</evidence>
<evidence type="ECO:0000305" key="6"/>
<evidence type="ECO:0000312" key="7">
    <source>
        <dbReference type="EMBL" id="AAW80693.1"/>
    </source>
</evidence>
<evidence type="ECO:0000312" key="8">
    <source>
        <dbReference type="EMBL" id="ABX25613.1"/>
    </source>
</evidence>
<protein>
    <recommendedName>
        <fullName>Pheromone-binding protein Gp-9</fullName>
        <shortName>PBP</shortName>
    </recommendedName>
    <alternativeName>
        <fullName>Putative odorant-binding protein Gp-9</fullName>
    </alternativeName>
</protein>
<feature type="signal peptide" evidence="3">
    <location>
        <begin position="1"/>
        <end position="19"/>
    </location>
</feature>
<feature type="chain" id="PRO_5000094270" description="Pheromone-binding protein Gp-9" evidence="3">
    <location>
        <begin position="20"/>
        <end position="153"/>
    </location>
</feature>
<feature type="disulfide bond" evidence="2">
    <location>
        <begin position="37"/>
        <end position="77"/>
    </location>
</feature>
<feature type="disulfide bond" evidence="2">
    <location>
        <begin position="73"/>
        <end position="129"/>
    </location>
</feature>
<feature type="disulfide bond" evidence="2">
    <location>
        <begin position="118"/>
        <end position="138"/>
    </location>
</feature>
<reference evidence="6 7" key="1">
    <citation type="journal article" date="2005" name="Mol. Biol. Evol.">
        <title>Molecular evolutionary analyses of the odorant-binding protein gene Gp-9 in fire ants and other Solenopsis species.</title>
        <authorList>
            <person name="Krieger M.J.B."/>
            <person name="Ross K.G."/>
        </authorList>
    </citation>
    <scope>NUCLEOTIDE SEQUENCE [GENOMIC DNA] (ALLELE B)</scope>
</reference>
<reference evidence="6 8" key="2">
    <citation type="journal article" date="2007" name="PLoS ONE">
        <title>Molecular variation at a candidate gene implicated in the regulation of fire ant social behavior.</title>
        <authorList>
            <person name="Gotzek D."/>
            <person name="Shoemaker D.D."/>
            <person name="Ross K.G."/>
        </authorList>
    </citation>
    <scope>NUCLEOTIDE SEQUENCE [GENOMIC DNA] OF 9-153</scope>
    <source>
        <strain evidence="8">Arg04-141dag</strain>
    </source>
</reference>
<keyword id="KW-0085">Behavior</keyword>
<keyword id="KW-1015">Disulfide bond</keyword>
<keyword id="KW-0589">Pheromone response</keyword>
<keyword id="KW-0590">Pheromone-binding</keyword>
<keyword id="KW-0964">Secreted</keyword>
<keyword id="KW-0732">Signal</keyword>
<keyword id="KW-0813">Transport</keyword>
<gene>
    <name evidence="7" type="primary">Gp-9</name>
</gene>
<dbReference type="EMBL" id="AY818626">
    <property type="protein sequence ID" value="AAW80693.1"/>
    <property type="molecule type" value="Genomic_DNA"/>
</dbReference>
<dbReference type="EMBL" id="EU220034">
    <property type="protein sequence ID" value="ABX25613.1"/>
    <property type="molecule type" value="Genomic_DNA"/>
</dbReference>
<dbReference type="SMR" id="Q5EP05"/>
<dbReference type="GO" id="GO:0005615">
    <property type="term" value="C:extracellular space"/>
    <property type="evidence" value="ECO:0000250"/>
    <property type="project" value="UniProtKB"/>
</dbReference>
<dbReference type="GO" id="GO:0005550">
    <property type="term" value="F:pheromone binding"/>
    <property type="evidence" value="ECO:0007669"/>
    <property type="project" value="UniProtKB-KW"/>
</dbReference>
<dbReference type="GO" id="GO:0019236">
    <property type="term" value="P:response to pheromone"/>
    <property type="evidence" value="ECO:0007669"/>
    <property type="project" value="UniProtKB-KW"/>
</dbReference>
<dbReference type="GO" id="GO:0035176">
    <property type="term" value="P:social behavior"/>
    <property type="evidence" value="ECO:0000250"/>
    <property type="project" value="UniProtKB"/>
</dbReference>
<dbReference type="CDD" id="cd23992">
    <property type="entry name" value="PBP_GOBP"/>
    <property type="match status" value="1"/>
</dbReference>
<dbReference type="FunFam" id="1.10.238.20:FF:000004">
    <property type="entry name" value="Pheromone-binding protein Gp-9"/>
    <property type="match status" value="1"/>
</dbReference>
<dbReference type="Gene3D" id="1.10.238.20">
    <property type="entry name" value="Pheromone/general odorant binding protein domain"/>
    <property type="match status" value="1"/>
</dbReference>
<dbReference type="InterPro" id="IPR006170">
    <property type="entry name" value="PBP/GOBP"/>
</dbReference>
<dbReference type="InterPro" id="IPR036728">
    <property type="entry name" value="PBP_GOBP_sf"/>
</dbReference>
<dbReference type="InterPro" id="IPR022354">
    <property type="entry name" value="Pheromone-bd_protein_Gp-9"/>
</dbReference>
<dbReference type="Pfam" id="PF01395">
    <property type="entry name" value="PBP_GOBP"/>
    <property type="match status" value="1"/>
</dbReference>
<dbReference type="PRINTS" id="PR02007">
    <property type="entry name" value="ODORANTBPGP9"/>
</dbReference>
<dbReference type="SUPFAM" id="SSF47565">
    <property type="entry name" value="Insect pheromone/odorant-binding proteins"/>
    <property type="match status" value="1"/>
</dbReference>
<name>PBGP9_SOLDA</name>
<sequence length="153" mass="16850">MKTFVLHIFIFALVAFASASRDSAKKIGSQYDNYETCLTEHGLTEDDVFSIGEVSSGQHKTNHEDTELHKNGCVMQCLLEKDGLMSGADYDEEKMREDYIKETGAQPGDQRIEALNACMQETKDMEDKCDKSLVLVACVLAAEAILADSSEAA</sequence>
<accession>Q5EP05</accession>
<accession>A9LKD5</accession>
<organism>
    <name type="scientific">Solenopsis daguerrei</name>
    <name type="common">Workerless parasitic ant</name>
    <name type="synonym">Labauchena daguerrei</name>
    <dbReference type="NCBI Taxonomy" id="310437"/>
    <lineage>
        <taxon>Eukaryota</taxon>
        <taxon>Metazoa</taxon>
        <taxon>Ecdysozoa</taxon>
        <taxon>Arthropoda</taxon>
        <taxon>Hexapoda</taxon>
        <taxon>Insecta</taxon>
        <taxon>Pterygota</taxon>
        <taxon>Neoptera</taxon>
        <taxon>Endopterygota</taxon>
        <taxon>Hymenoptera</taxon>
        <taxon>Apocrita</taxon>
        <taxon>Aculeata</taxon>
        <taxon>Formicoidea</taxon>
        <taxon>Formicidae</taxon>
        <taxon>Myrmicinae</taxon>
        <taxon>Solenopsis</taxon>
    </lineage>
</organism>